<gene>
    <name type="ordered locus">LJ_0535</name>
</gene>
<dbReference type="EMBL" id="AE017198">
    <property type="protein sequence ID" value="AAS09686.1"/>
    <property type="molecule type" value="Genomic_DNA"/>
</dbReference>
<dbReference type="RefSeq" id="WP_011162536.1">
    <property type="nucleotide sequence ID" value="NC_005362.1"/>
</dbReference>
<dbReference type="SMR" id="Q74HK4"/>
<dbReference type="GeneID" id="83571152"/>
<dbReference type="KEGG" id="ljo:LJ_0535"/>
<dbReference type="eggNOG" id="COG3022">
    <property type="taxonomic scope" value="Bacteria"/>
</dbReference>
<dbReference type="HOGENOM" id="CLU_061989_1_0_9"/>
<dbReference type="Proteomes" id="UP000000581">
    <property type="component" value="Chromosome"/>
</dbReference>
<dbReference type="GO" id="GO:0005829">
    <property type="term" value="C:cytosol"/>
    <property type="evidence" value="ECO:0007669"/>
    <property type="project" value="TreeGrafter"/>
</dbReference>
<dbReference type="GO" id="GO:0033194">
    <property type="term" value="P:response to hydroperoxide"/>
    <property type="evidence" value="ECO:0007669"/>
    <property type="project" value="TreeGrafter"/>
</dbReference>
<dbReference type="HAMAP" id="MF_00652">
    <property type="entry name" value="UPF0246"/>
    <property type="match status" value="1"/>
</dbReference>
<dbReference type="InterPro" id="IPR005583">
    <property type="entry name" value="YaaA"/>
</dbReference>
<dbReference type="NCBIfam" id="NF002543">
    <property type="entry name" value="PRK02101.1-4"/>
    <property type="match status" value="1"/>
</dbReference>
<dbReference type="PANTHER" id="PTHR30283:SF4">
    <property type="entry name" value="PEROXIDE STRESS RESISTANCE PROTEIN YAAA"/>
    <property type="match status" value="1"/>
</dbReference>
<dbReference type="PANTHER" id="PTHR30283">
    <property type="entry name" value="PEROXIDE STRESS RESPONSE PROTEIN YAAA"/>
    <property type="match status" value="1"/>
</dbReference>
<dbReference type="Pfam" id="PF03883">
    <property type="entry name" value="H2O2_YaaD"/>
    <property type="match status" value="1"/>
</dbReference>
<name>Y535_LACJO</name>
<sequence>MSDNNIKIIIAPAKKMRVDQDTFLVKSEPAFLDKTQELLDFLKTRSFNQLQDLWKANDNIVRTNQHNLVTSELDSNLTPALLAFSGIQYQYLAGDVLPQEGLDYLQDHLRILSGFYGILRPFDGIIPYRLELKTQMTGFKYYSLYNFWKDLPYQELFADTDTVINLASLEYSRLISPYLKDSQKMITIKFLENKNGKWRQSATHAKMARGEMVRFAAKEGINRPEDLKEFSDFGYVFSAADSTKENYIFKKL</sequence>
<organism>
    <name type="scientific">Lactobacillus johnsonii (strain CNCM I-12250 / La1 / NCC 533)</name>
    <dbReference type="NCBI Taxonomy" id="257314"/>
    <lineage>
        <taxon>Bacteria</taxon>
        <taxon>Bacillati</taxon>
        <taxon>Bacillota</taxon>
        <taxon>Bacilli</taxon>
        <taxon>Lactobacillales</taxon>
        <taxon>Lactobacillaceae</taxon>
        <taxon>Lactobacillus</taxon>
    </lineage>
</organism>
<reference key="1">
    <citation type="journal article" date="2004" name="Proc. Natl. Acad. Sci. U.S.A.">
        <title>The genome sequence of the probiotic intestinal bacterium Lactobacillus johnsonii NCC 533.</title>
        <authorList>
            <person name="Pridmore R.D."/>
            <person name="Berger B."/>
            <person name="Desiere F."/>
            <person name="Vilanova D."/>
            <person name="Barretto C."/>
            <person name="Pittet A.-C."/>
            <person name="Zwahlen M.-C."/>
            <person name="Rouvet M."/>
            <person name="Altermann E."/>
            <person name="Barrangou R."/>
            <person name="Mollet B."/>
            <person name="Mercenier A."/>
            <person name="Klaenhammer T."/>
            <person name="Arigoni F."/>
            <person name="Schell M.A."/>
        </authorList>
    </citation>
    <scope>NUCLEOTIDE SEQUENCE [LARGE SCALE GENOMIC DNA]</scope>
    <source>
        <strain>CNCM I-1225 / La1 / NCC 533</strain>
    </source>
</reference>
<evidence type="ECO:0000255" key="1">
    <source>
        <dbReference type="HAMAP-Rule" id="MF_00652"/>
    </source>
</evidence>
<comment type="similarity">
    <text evidence="1">Belongs to the UPF0246 family.</text>
</comment>
<proteinExistence type="inferred from homology"/>
<feature type="chain" id="PRO_0000262028" description="UPF0246 protein LJ_0535">
    <location>
        <begin position="1"/>
        <end position="252"/>
    </location>
</feature>
<accession>Q74HK4</accession>
<protein>
    <recommendedName>
        <fullName evidence="1">UPF0246 protein LJ_0535</fullName>
    </recommendedName>
</protein>